<comment type="function">
    <text evidence="1">One of the early assembly proteins it binds 23S rRNA. One of the proteins that surrounds the polypeptide exit tunnel on the outside of the ribosome. Forms the main docking site for trigger factor binding to the ribosome.</text>
</comment>
<comment type="subunit">
    <text evidence="1">Part of the 50S ribosomal subunit. Contacts protein L29, and trigger factor when it is bound to the ribosome.</text>
</comment>
<comment type="similarity">
    <text evidence="1">Belongs to the universal ribosomal protein uL23 family.</text>
</comment>
<gene>
    <name evidence="1" type="primary">rplW</name>
    <name type="ordered locus">LPC_3011</name>
</gene>
<evidence type="ECO:0000255" key="1">
    <source>
        <dbReference type="HAMAP-Rule" id="MF_01369"/>
    </source>
</evidence>
<evidence type="ECO:0000305" key="2"/>
<protein>
    <recommendedName>
        <fullName evidence="1">Large ribosomal subunit protein uL23</fullName>
    </recommendedName>
    <alternativeName>
        <fullName evidence="2">50S ribosomal protein L23</fullName>
    </alternativeName>
</protein>
<organism>
    <name type="scientific">Legionella pneumophila (strain Corby)</name>
    <dbReference type="NCBI Taxonomy" id="400673"/>
    <lineage>
        <taxon>Bacteria</taxon>
        <taxon>Pseudomonadati</taxon>
        <taxon>Pseudomonadota</taxon>
        <taxon>Gammaproteobacteria</taxon>
        <taxon>Legionellales</taxon>
        <taxon>Legionellaceae</taxon>
        <taxon>Legionella</taxon>
    </lineage>
</organism>
<dbReference type="EMBL" id="CP000675">
    <property type="protein sequence ID" value="ABQ56912.1"/>
    <property type="molecule type" value="Genomic_DNA"/>
</dbReference>
<dbReference type="RefSeq" id="WP_011213009.1">
    <property type="nucleotide sequence ID" value="NZ_JAPMSS010000006.1"/>
</dbReference>
<dbReference type="SMR" id="A5IHR2"/>
<dbReference type="GeneID" id="57034334"/>
<dbReference type="KEGG" id="lpc:LPC_3011"/>
<dbReference type="HOGENOM" id="CLU_037562_3_1_6"/>
<dbReference type="GO" id="GO:1990904">
    <property type="term" value="C:ribonucleoprotein complex"/>
    <property type="evidence" value="ECO:0007669"/>
    <property type="project" value="UniProtKB-KW"/>
</dbReference>
<dbReference type="GO" id="GO:0005840">
    <property type="term" value="C:ribosome"/>
    <property type="evidence" value="ECO:0007669"/>
    <property type="project" value="UniProtKB-KW"/>
</dbReference>
<dbReference type="GO" id="GO:0019843">
    <property type="term" value="F:rRNA binding"/>
    <property type="evidence" value="ECO:0007669"/>
    <property type="project" value="UniProtKB-UniRule"/>
</dbReference>
<dbReference type="GO" id="GO:0003735">
    <property type="term" value="F:structural constituent of ribosome"/>
    <property type="evidence" value="ECO:0007669"/>
    <property type="project" value="InterPro"/>
</dbReference>
<dbReference type="GO" id="GO:0006412">
    <property type="term" value="P:translation"/>
    <property type="evidence" value="ECO:0007669"/>
    <property type="project" value="UniProtKB-UniRule"/>
</dbReference>
<dbReference type="FunFam" id="3.30.70.330:FF:000001">
    <property type="entry name" value="50S ribosomal protein L23"/>
    <property type="match status" value="1"/>
</dbReference>
<dbReference type="Gene3D" id="3.30.70.330">
    <property type="match status" value="1"/>
</dbReference>
<dbReference type="HAMAP" id="MF_01369_B">
    <property type="entry name" value="Ribosomal_uL23_B"/>
    <property type="match status" value="1"/>
</dbReference>
<dbReference type="InterPro" id="IPR012677">
    <property type="entry name" value="Nucleotide-bd_a/b_plait_sf"/>
</dbReference>
<dbReference type="InterPro" id="IPR013025">
    <property type="entry name" value="Ribosomal_uL23-like"/>
</dbReference>
<dbReference type="InterPro" id="IPR012678">
    <property type="entry name" value="Ribosomal_uL23/eL15/eS24_sf"/>
</dbReference>
<dbReference type="NCBIfam" id="NF004359">
    <property type="entry name" value="PRK05738.1-3"/>
    <property type="match status" value="1"/>
</dbReference>
<dbReference type="NCBIfam" id="NF004363">
    <property type="entry name" value="PRK05738.2-4"/>
    <property type="match status" value="1"/>
</dbReference>
<dbReference type="PANTHER" id="PTHR11620">
    <property type="entry name" value="60S RIBOSOMAL PROTEIN L23A"/>
    <property type="match status" value="1"/>
</dbReference>
<dbReference type="Pfam" id="PF00276">
    <property type="entry name" value="Ribosomal_L23"/>
    <property type="match status" value="1"/>
</dbReference>
<dbReference type="SUPFAM" id="SSF54189">
    <property type="entry name" value="Ribosomal proteins S24e, L23 and L15e"/>
    <property type="match status" value="1"/>
</dbReference>
<feature type="chain" id="PRO_1000068099" description="Large ribosomal subunit protein uL23">
    <location>
        <begin position="1"/>
        <end position="98"/>
    </location>
</feature>
<sequence>MNAERLMMVLREPHTSEKATVMADKFKQFTFKVLKNATKTEIKLAVEHIFNVKVKSVSVVNVKGKSKRFKQTSGKRSDWKKAFVSLHADQDIDFTVTE</sequence>
<accession>A5IHR2</accession>
<keyword id="KW-0687">Ribonucleoprotein</keyword>
<keyword id="KW-0689">Ribosomal protein</keyword>
<keyword id="KW-0694">RNA-binding</keyword>
<keyword id="KW-0699">rRNA-binding</keyword>
<reference key="1">
    <citation type="submission" date="2006-11" db="EMBL/GenBank/DDBJ databases">
        <title>Identification and characterization of a new conjugation/ type IVA secretion system (trb/tra) of L. pneumophila Corby localized on a mobile genomic island.</title>
        <authorList>
            <person name="Gloeckner G."/>
            <person name="Albert-Weissenberger C."/>
            <person name="Weinmann E."/>
            <person name="Jacobi S."/>
            <person name="Schunder E."/>
            <person name="Steinert M."/>
            <person name="Buchrieser C."/>
            <person name="Hacker J."/>
            <person name="Heuner K."/>
        </authorList>
    </citation>
    <scope>NUCLEOTIDE SEQUENCE [LARGE SCALE GENOMIC DNA]</scope>
    <source>
        <strain>Corby</strain>
    </source>
</reference>
<name>RL23_LEGPC</name>
<proteinExistence type="inferred from homology"/>